<organism>
    <name type="scientific">Cellvibrio japonicus (strain Ueda107)</name>
    <name type="common">Pseudomonas fluorescens subsp. cellulosa</name>
    <dbReference type="NCBI Taxonomy" id="498211"/>
    <lineage>
        <taxon>Bacteria</taxon>
        <taxon>Pseudomonadati</taxon>
        <taxon>Pseudomonadota</taxon>
        <taxon>Gammaproteobacteria</taxon>
        <taxon>Cellvibrionales</taxon>
        <taxon>Cellvibrionaceae</taxon>
        <taxon>Cellvibrio</taxon>
    </lineage>
</organism>
<gene>
    <name evidence="1" type="primary">tsaC</name>
    <name type="synonym">rimN</name>
    <name type="ordered locus">CJA_3586</name>
</gene>
<accession>B3PGZ1</accession>
<sequence length="189" mass="20549">MIDWSLNPRVNYAANMMRQGGVIAYPTEAVWGLGCNPFDEDAVADLLALKQRPVEKGVILIAANLQQIEPFIDHLDDLQRQRLKNTWPGPVTWLVPNNGLAPHWITGAFPSVALRVTDHPVAAGLCRAFGGPVVSTSCNPAGKPPARNIHEVRRYFGGQLDAVSSGLAGRRTNPSEIRDLLTGQVVRPS</sequence>
<proteinExistence type="inferred from homology"/>
<comment type="function">
    <text evidence="1">Required for the formation of a threonylcarbamoyl group on adenosine at position 37 (t(6)A37) in tRNAs that read codons beginning with adenine. Catalyzes the conversion of L-threonine, HCO(3)(-)/CO(2) and ATP to give threonylcarbamoyl-AMP (TC-AMP) as the acyladenylate intermediate, with the release of diphosphate.</text>
</comment>
<comment type="catalytic activity">
    <reaction evidence="1">
        <text>L-threonine + hydrogencarbonate + ATP = L-threonylcarbamoyladenylate + diphosphate + H2O</text>
        <dbReference type="Rhea" id="RHEA:36407"/>
        <dbReference type="ChEBI" id="CHEBI:15377"/>
        <dbReference type="ChEBI" id="CHEBI:17544"/>
        <dbReference type="ChEBI" id="CHEBI:30616"/>
        <dbReference type="ChEBI" id="CHEBI:33019"/>
        <dbReference type="ChEBI" id="CHEBI:57926"/>
        <dbReference type="ChEBI" id="CHEBI:73682"/>
        <dbReference type="EC" id="2.7.7.87"/>
    </reaction>
</comment>
<comment type="subcellular location">
    <subcellularLocation>
        <location evidence="1">Cytoplasm</location>
    </subcellularLocation>
</comment>
<comment type="similarity">
    <text evidence="1">Belongs to the SUA5 family. TsaC subfamily.</text>
</comment>
<comment type="sequence caution" evidence="2">
    <conflict type="erroneous initiation">
        <sequence resource="EMBL-CDS" id="ACE84136"/>
    </conflict>
</comment>
<keyword id="KW-0067">ATP-binding</keyword>
<keyword id="KW-0963">Cytoplasm</keyword>
<keyword id="KW-0547">Nucleotide-binding</keyword>
<keyword id="KW-0548">Nucleotidyltransferase</keyword>
<keyword id="KW-1185">Reference proteome</keyword>
<keyword id="KW-0808">Transferase</keyword>
<keyword id="KW-0819">tRNA processing</keyword>
<reference key="1">
    <citation type="journal article" date="2008" name="J. Bacteriol.">
        <title>Insights into plant cell wall degradation from the genome sequence of the soil bacterium Cellvibrio japonicus.</title>
        <authorList>
            <person name="DeBoy R.T."/>
            <person name="Mongodin E.F."/>
            <person name="Fouts D.E."/>
            <person name="Tailford L.E."/>
            <person name="Khouri H."/>
            <person name="Emerson J.B."/>
            <person name="Mohamoud Y."/>
            <person name="Watkins K."/>
            <person name="Henrissat B."/>
            <person name="Gilbert H.J."/>
            <person name="Nelson K.E."/>
        </authorList>
    </citation>
    <scope>NUCLEOTIDE SEQUENCE [LARGE SCALE GENOMIC DNA]</scope>
    <source>
        <strain>Ueda107</strain>
    </source>
</reference>
<feature type="chain" id="PRO_0000352902" description="Threonylcarbamoyl-AMP synthase">
    <location>
        <begin position="1"/>
        <end position="189"/>
    </location>
</feature>
<feature type="domain" description="YrdC-like" evidence="1">
    <location>
        <begin position="7"/>
        <end position="189"/>
    </location>
</feature>
<name>TSAC_CELJU</name>
<evidence type="ECO:0000255" key="1">
    <source>
        <dbReference type="HAMAP-Rule" id="MF_01852"/>
    </source>
</evidence>
<evidence type="ECO:0000305" key="2"/>
<protein>
    <recommendedName>
        <fullName evidence="1">Threonylcarbamoyl-AMP synthase</fullName>
        <shortName evidence="1">TC-AMP synthase</shortName>
        <ecNumber evidence="1">2.7.7.87</ecNumber>
    </recommendedName>
    <alternativeName>
        <fullName evidence="1">L-threonylcarbamoyladenylate synthase</fullName>
    </alternativeName>
    <alternativeName>
        <fullName evidence="1">t(6)A37 threonylcarbamoyladenosine biosynthesis protein TsaC</fullName>
    </alternativeName>
    <alternativeName>
        <fullName evidence="1">tRNA threonylcarbamoyladenosine biosynthesis protein TsaC</fullName>
    </alternativeName>
</protein>
<dbReference type="EC" id="2.7.7.87" evidence="1"/>
<dbReference type="EMBL" id="CP000934">
    <property type="protein sequence ID" value="ACE84136.1"/>
    <property type="status" value="ALT_INIT"/>
    <property type="molecule type" value="Genomic_DNA"/>
</dbReference>
<dbReference type="RefSeq" id="WP_148208923.1">
    <property type="nucleotide sequence ID" value="NC_010995.1"/>
</dbReference>
<dbReference type="SMR" id="B3PGZ1"/>
<dbReference type="STRING" id="498211.CJA_3586"/>
<dbReference type="KEGG" id="cja:CJA_3586"/>
<dbReference type="eggNOG" id="COG0009">
    <property type="taxonomic scope" value="Bacteria"/>
</dbReference>
<dbReference type="HOGENOM" id="CLU_031397_6_0_6"/>
<dbReference type="OrthoDB" id="9814580at2"/>
<dbReference type="Proteomes" id="UP000001036">
    <property type="component" value="Chromosome"/>
</dbReference>
<dbReference type="GO" id="GO:0005737">
    <property type="term" value="C:cytoplasm"/>
    <property type="evidence" value="ECO:0007669"/>
    <property type="project" value="UniProtKB-SubCell"/>
</dbReference>
<dbReference type="GO" id="GO:0005524">
    <property type="term" value="F:ATP binding"/>
    <property type="evidence" value="ECO:0007669"/>
    <property type="project" value="UniProtKB-UniRule"/>
</dbReference>
<dbReference type="GO" id="GO:0003725">
    <property type="term" value="F:double-stranded RNA binding"/>
    <property type="evidence" value="ECO:0007669"/>
    <property type="project" value="InterPro"/>
</dbReference>
<dbReference type="GO" id="GO:0061710">
    <property type="term" value="F:L-threonylcarbamoyladenylate synthase"/>
    <property type="evidence" value="ECO:0007669"/>
    <property type="project" value="UniProtKB-EC"/>
</dbReference>
<dbReference type="GO" id="GO:0000049">
    <property type="term" value="F:tRNA binding"/>
    <property type="evidence" value="ECO:0007669"/>
    <property type="project" value="TreeGrafter"/>
</dbReference>
<dbReference type="GO" id="GO:0006450">
    <property type="term" value="P:regulation of translational fidelity"/>
    <property type="evidence" value="ECO:0007669"/>
    <property type="project" value="TreeGrafter"/>
</dbReference>
<dbReference type="GO" id="GO:0002949">
    <property type="term" value="P:tRNA threonylcarbamoyladenosine modification"/>
    <property type="evidence" value="ECO:0007669"/>
    <property type="project" value="UniProtKB-UniRule"/>
</dbReference>
<dbReference type="FunFam" id="3.90.870.10:FF:000004">
    <property type="entry name" value="Threonylcarbamoyl-AMP synthase"/>
    <property type="match status" value="1"/>
</dbReference>
<dbReference type="Gene3D" id="3.90.870.10">
    <property type="entry name" value="DHBP synthase"/>
    <property type="match status" value="1"/>
</dbReference>
<dbReference type="HAMAP" id="MF_01852">
    <property type="entry name" value="TsaC"/>
    <property type="match status" value="1"/>
</dbReference>
<dbReference type="InterPro" id="IPR017945">
    <property type="entry name" value="DHBP_synth_RibB-like_a/b_dom"/>
</dbReference>
<dbReference type="InterPro" id="IPR006070">
    <property type="entry name" value="Sua5-like_dom"/>
</dbReference>
<dbReference type="InterPro" id="IPR023535">
    <property type="entry name" value="TC-AMP_synthase"/>
</dbReference>
<dbReference type="InterPro" id="IPR050156">
    <property type="entry name" value="TC-AMP_synthase_SUA5"/>
</dbReference>
<dbReference type="PANTHER" id="PTHR17490">
    <property type="entry name" value="SUA5"/>
    <property type="match status" value="1"/>
</dbReference>
<dbReference type="PANTHER" id="PTHR17490:SF18">
    <property type="entry name" value="THREONYLCARBAMOYL-AMP SYNTHASE"/>
    <property type="match status" value="1"/>
</dbReference>
<dbReference type="Pfam" id="PF01300">
    <property type="entry name" value="Sua5_yciO_yrdC"/>
    <property type="match status" value="1"/>
</dbReference>
<dbReference type="SUPFAM" id="SSF55821">
    <property type="entry name" value="YrdC/RibB"/>
    <property type="match status" value="1"/>
</dbReference>
<dbReference type="PROSITE" id="PS51163">
    <property type="entry name" value="YRDC"/>
    <property type="match status" value="1"/>
</dbReference>